<name>HSLV_HELPG</name>
<protein>
    <recommendedName>
        <fullName evidence="1">ATP-dependent protease subunit HslV</fullName>
        <ecNumber evidence="1">3.4.25.2</ecNumber>
    </recommendedName>
</protein>
<comment type="function">
    <text evidence="1">Protease subunit of a proteasome-like degradation complex believed to be a general protein degrading machinery.</text>
</comment>
<comment type="catalytic activity">
    <reaction evidence="1">
        <text>ATP-dependent cleavage of peptide bonds with broad specificity.</text>
        <dbReference type="EC" id="3.4.25.2"/>
    </reaction>
</comment>
<comment type="activity regulation">
    <text evidence="1">Allosterically activated by HslU binding.</text>
</comment>
<comment type="subunit">
    <text evidence="1">A double ring-shaped homohexamer of HslV is capped on each side by a ring-shaped HslU homohexamer. The assembly of the HslU/HslV complex is dependent on binding of ATP.</text>
</comment>
<comment type="subcellular location">
    <subcellularLocation>
        <location evidence="1">Cytoplasm</location>
    </subcellularLocation>
</comment>
<comment type="similarity">
    <text evidence="1">Belongs to the peptidase T1B family. HslV subfamily.</text>
</comment>
<gene>
    <name evidence="1" type="primary">hslV</name>
    <name type="ordered locus">HPG27_474</name>
</gene>
<evidence type="ECO:0000255" key="1">
    <source>
        <dbReference type="HAMAP-Rule" id="MF_00248"/>
    </source>
</evidence>
<feature type="chain" id="PRO_1000100895" description="ATP-dependent protease subunit HslV">
    <location>
        <begin position="1"/>
        <end position="180"/>
    </location>
</feature>
<feature type="active site" evidence="1">
    <location>
        <position position="5"/>
    </location>
</feature>
<feature type="binding site" evidence="1">
    <location>
        <position position="165"/>
    </location>
    <ligand>
        <name>Na(+)</name>
        <dbReference type="ChEBI" id="CHEBI:29101"/>
    </ligand>
</feature>
<feature type="binding site" evidence="1">
    <location>
        <position position="168"/>
    </location>
    <ligand>
        <name>Na(+)</name>
        <dbReference type="ChEBI" id="CHEBI:29101"/>
    </ligand>
</feature>
<feature type="binding site" evidence="1">
    <location>
        <position position="171"/>
    </location>
    <ligand>
        <name>Na(+)</name>
        <dbReference type="ChEBI" id="CHEBI:29101"/>
    </ligand>
</feature>
<sequence length="180" mass="19856">MFEATTILGYRGEMGGKKFALIGGDGQVTLGNCVVKANATKIRSLYHNQVLSGFAGSTADAFSLFDMFERILESKKGDLFKSVVDFSKEWRKDKYLRRLEAMMIVLNLDHIFILSGMGDVLEAEDNKIAAIGSGGNYALSAARALDHFAHLEPRKLVEESLKIAGDLCIYTNTNIKILEL</sequence>
<organism>
    <name type="scientific">Helicobacter pylori (strain G27)</name>
    <dbReference type="NCBI Taxonomy" id="563041"/>
    <lineage>
        <taxon>Bacteria</taxon>
        <taxon>Pseudomonadati</taxon>
        <taxon>Campylobacterota</taxon>
        <taxon>Epsilonproteobacteria</taxon>
        <taxon>Campylobacterales</taxon>
        <taxon>Helicobacteraceae</taxon>
        <taxon>Helicobacter</taxon>
    </lineage>
</organism>
<dbReference type="EC" id="3.4.25.2" evidence="1"/>
<dbReference type="EMBL" id="CP001173">
    <property type="protein sequence ID" value="ACI27237.1"/>
    <property type="molecule type" value="Genomic_DNA"/>
</dbReference>
<dbReference type="RefSeq" id="WP_000461046.1">
    <property type="nucleotide sequence ID" value="NC_011333.1"/>
</dbReference>
<dbReference type="SMR" id="B5Z6N8"/>
<dbReference type="KEGG" id="hpg:HPG27_474"/>
<dbReference type="HOGENOM" id="CLU_093872_1_1_7"/>
<dbReference type="Proteomes" id="UP000001735">
    <property type="component" value="Chromosome"/>
</dbReference>
<dbReference type="GO" id="GO:0009376">
    <property type="term" value="C:HslUV protease complex"/>
    <property type="evidence" value="ECO:0007669"/>
    <property type="project" value="UniProtKB-UniRule"/>
</dbReference>
<dbReference type="GO" id="GO:0005839">
    <property type="term" value="C:proteasome core complex"/>
    <property type="evidence" value="ECO:0007669"/>
    <property type="project" value="InterPro"/>
</dbReference>
<dbReference type="GO" id="GO:0046872">
    <property type="term" value="F:metal ion binding"/>
    <property type="evidence" value="ECO:0007669"/>
    <property type="project" value="UniProtKB-KW"/>
</dbReference>
<dbReference type="GO" id="GO:0004298">
    <property type="term" value="F:threonine-type endopeptidase activity"/>
    <property type="evidence" value="ECO:0007669"/>
    <property type="project" value="UniProtKB-KW"/>
</dbReference>
<dbReference type="GO" id="GO:0051603">
    <property type="term" value="P:proteolysis involved in protein catabolic process"/>
    <property type="evidence" value="ECO:0007669"/>
    <property type="project" value="InterPro"/>
</dbReference>
<dbReference type="Gene3D" id="3.60.20.10">
    <property type="entry name" value="Glutamine Phosphoribosylpyrophosphate, subunit 1, domain 1"/>
    <property type="match status" value="1"/>
</dbReference>
<dbReference type="HAMAP" id="MF_00248">
    <property type="entry name" value="HslV"/>
    <property type="match status" value="1"/>
</dbReference>
<dbReference type="InterPro" id="IPR022281">
    <property type="entry name" value="ATP-dep_Prtase_HsIV_su"/>
</dbReference>
<dbReference type="InterPro" id="IPR029055">
    <property type="entry name" value="Ntn_hydrolases_N"/>
</dbReference>
<dbReference type="InterPro" id="IPR001353">
    <property type="entry name" value="Proteasome_sua/b"/>
</dbReference>
<dbReference type="InterPro" id="IPR023333">
    <property type="entry name" value="Proteasome_suB-type"/>
</dbReference>
<dbReference type="NCBIfam" id="TIGR03692">
    <property type="entry name" value="ATP_dep_HslV"/>
    <property type="match status" value="1"/>
</dbReference>
<dbReference type="NCBIfam" id="NF003964">
    <property type="entry name" value="PRK05456.1"/>
    <property type="match status" value="1"/>
</dbReference>
<dbReference type="PANTHER" id="PTHR32194:SF0">
    <property type="entry name" value="ATP-DEPENDENT PROTEASE SUBUNIT HSLV"/>
    <property type="match status" value="1"/>
</dbReference>
<dbReference type="PANTHER" id="PTHR32194">
    <property type="entry name" value="METALLOPROTEASE TLDD"/>
    <property type="match status" value="1"/>
</dbReference>
<dbReference type="Pfam" id="PF00227">
    <property type="entry name" value="Proteasome"/>
    <property type="match status" value="1"/>
</dbReference>
<dbReference type="SUPFAM" id="SSF56235">
    <property type="entry name" value="N-terminal nucleophile aminohydrolases (Ntn hydrolases)"/>
    <property type="match status" value="1"/>
</dbReference>
<dbReference type="PROSITE" id="PS51476">
    <property type="entry name" value="PROTEASOME_BETA_2"/>
    <property type="match status" value="1"/>
</dbReference>
<reference key="1">
    <citation type="journal article" date="2009" name="J. Bacteriol.">
        <title>The complete genome sequence of Helicobacter pylori strain G27.</title>
        <authorList>
            <person name="Baltrus D.A."/>
            <person name="Amieva M.R."/>
            <person name="Covacci A."/>
            <person name="Lowe T.M."/>
            <person name="Merrell D.S."/>
            <person name="Ottemann K.M."/>
            <person name="Stein M."/>
            <person name="Salama N.R."/>
            <person name="Guillemin K."/>
        </authorList>
    </citation>
    <scope>NUCLEOTIDE SEQUENCE [LARGE SCALE GENOMIC DNA]</scope>
    <source>
        <strain>G27</strain>
    </source>
</reference>
<keyword id="KW-0021">Allosteric enzyme</keyword>
<keyword id="KW-0963">Cytoplasm</keyword>
<keyword id="KW-0378">Hydrolase</keyword>
<keyword id="KW-0479">Metal-binding</keyword>
<keyword id="KW-0645">Protease</keyword>
<keyword id="KW-1185">Reference proteome</keyword>
<keyword id="KW-0915">Sodium</keyword>
<keyword id="KW-0346">Stress response</keyword>
<keyword id="KW-0888">Threonine protease</keyword>
<proteinExistence type="inferred from homology"/>
<accession>B5Z6N8</accession>